<gene>
    <name evidence="1" type="primary">leuC</name>
    <name type="ordered locus">RBAM_025320</name>
</gene>
<comment type="function">
    <text evidence="1">Catalyzes the isomerization between 2-isopropylmalate and 3-isopropylmalate, via the formation of 2-isopropylmaleate.</text>
</comment>
<comment type="catalytic activity">
    <reaction evidence="1">
        <text>(2R,3S)-3-isopropylmalate = (2S)-2-isopropylmalate</text>
        <dbReference type="Rhea" id="RHEA:32287"/>
        <dbReference type="ChEBI" id="CHEBI:1178"/>
        <dbReference type="ChEBI" id="CHEBI:35121"/>
        <dbReference type="EC" id="4.2.1.33"/>
    </reaction>
</comment>
<comment type="cofactor">
    <cofactor evidence="1">
        <name>[4Fe-4S] cluster</name>
        <dbReference type="ChEBI" id="CHEBI:49883"/>
    </cofactor>
    <text evidence="1">Binds 1 [4Fe-4S] cluster per subunit.</text>
</comment>
<comment type="pathway">
    <text evidence="1">Amino-acid biosynthesis; L-leucine biosynthesis; L-leucine from 3-methyl-2-oxobutanoate: step 2/4.</text>
</comment>
<comment type="subunit">
    <text evidence="1">Heterodimer of LeuC and LeuD.</text>
</comment>
<comment type="similarity">
    <text evidence="1">Belongs to the aconitase/IPM isomerase family. LeuC type 1 subfamily.</text>
</comment>
<sequence length="472" mass="52128">MMPRTIIEKIWDRHVVKSGEGKPDLLYIDLHLIHEVTSPQAFEGLRQKGRKVRRPQNTFATMDHNIPTVNRFDIKDEVAKRQVTALERNCEEFGVRLADLHSADQGIVHVVGPELGLTLPGKTIVCGDSHTSTHGAFGALAFGIGTSEVEHVLSTQTLWQQRPKTLEIRVDGTLQKGVTAKDVILSVIGKYGVKFGTGYVIEYTGEVFRNMSMDERMTVCNMSIEAGARAGLIAPDDTTIEYCKNRKYAPKGEEFEKAAAEWKALKTDPGAVYDHSIVLDGSEISPMVTWGVNPGMVLPVDAQIPAPETIDSEDGKKEAIRAYEYMGISPNQKIEDIKVEHVFIGSCTNSRMTDLRQAADMIKGRKVADSVRAIVVPGSQSVKQQAEEEGLHRVFLEAGFEWRESGCSMCLSMNNDVVPEGERCASTSNRNFEGRQGKGARTHLVSPAMAAMAAIHGHFVDVRKFYQEKTVV</sequence>
<proteinExistence type="inferred from homology"/>
<feature type="chain" id="PRO_1000063527" description="3-isopropylmalate dehydratase large subunit">
    <location>
        <begin position="1"/>
        <end position="472"/>
    </location>
</feature>
<feature type="binding site" evidence="1">
    <location>
        <position position="347"/>
    </location>
    <ligand>
        <name>[4Fe-4S] cluster</name>
        <dbReference type="ChEBI" id="CHEBI:49883"/>
    </ligand>
</feature>
<feature type="binding site" evidence="1">
    <location>
        <position position="407"/>
    </location>
    <ligand>
        <name>[4Fe-4S] cluster</name>
        <dbReference type="ChEBI" id="CHEBI:49883"/>
    </ligand>
</feature>
<feature type="binding site" evidence="1">
    <location>
        <position position="410"/>
    </location>
    <ligand>
        <name>[4Fe-4S] cluster</name>
        <dbReference type="ChEBI" id="CHEBI:49883"/>
    </ligand>
</feature>
<name>LEUC_BACVZ</name>
<accession>A7Z7B6</accession>
<evidence type="ECO:0000255" key="1">
    <source>
        <dbReference type="HAMAP-Rule" id="MF_01026"/>
    </source>
</evidence>
<organism>
    <name type="scientific">Bacillus velezensis (strain DSM 23117 / BGSC 10A6 / LMG 26770 / FZB42)</name>
    <name type="common">Bacillus amyloliquefaciens subsp. plantarum</name>
    <dbReference type="NCBI Taxonomy" id="326423"/>
    <lineage>
        <taxon>Bacteria</taxon>
        <taxon>Bacillati</taxon>
        <taxon>Bacillota</taxon>
        <taxon>Bacilli</taxon>
        <taxon>Bacillales</taxon>
        <taxon>Bacillaceae</taxon>
        <taxon>Bacillus</taxon>
        <taxon>Bacillus amyloliquefaciens group</taxon>
    </lineage>
</organism>
<dbReference type="EC" id="4.2.1.33" evidence="1"/>
<dbReference type="EMBL" id="CP000560">
    <property type="protein sequence ID" value="ABS74892.1"/>
    <property type="molecule type" value="Genomic_DNA"/>
</dbReference>
<dbReference type="RefSeq" id="WP_007408145.1">
    <property type="nucleotide sequence ID" value="NC_009725.2"/>
</dbReference>
<dbReference type="SMR" id="A7Z7B6"/>
<dbReference type="GeneID" id="93081674"/>
<dbReference type="KEGG" id="bay:RBAM_025320"/>
<dbReference type="HOGENOM" id="CLU_006714_3_4_9"/>
<dbReference type="UniPathway" id="UPA00048">
    <property type="reaction ID" value="UER00071"/>
</dbReference>
<dbReference type="Proteomes" id="UP000001120">
    <property type="component" value="Chromosome"/>
</dbReference>
<dbReference type="GO" id="GO:0003861">
    <property type="term" value="F:3-isopropylmalate dehydratase activity"/>
    <property type="evidence" value="ECO:0007669"/>
    <property type="project" value="UniProtKB-UniRule"/>
</dbReference>
<dbReference type="GO" id="GO:0051539">
    <property type="term" value="F:4 iron, 4 sulfur cluster binding"/>
    <property type="evidence" value="ECO:0007669"/>
    <property type="project" value="UniProtKB-KW"/>
</dbReference>
<dbReference type="GO" id="GO:0046872">
    <property type="term" value="F:metal ion binding"/>
    <property type="evidence" value="ECO:0007669"/>
    <property type="project" value="UniProtKB-KW"/>
</dbReference>
<dbReference type="GO" id="GO:0009098">
    <property type="term" value="P:L-leucine biosynthetic process"/>
    <property type="evidence" value="ECO:0007669"/>
    <property type="project" value="UniProtKB-UniRule"/>
</dbReference>
<dbReference type="CDD" id="cd01583">
    <property type="entry name" value="IPMI"/>
    <property type="match status" value="1"/>
</dbReference>
<dbReference type="FunFam" id="3.30.499.10:FF:000007">
    <property type="entry name" value="3-isopropylmalate dehydratase large subunit"/>
    <property type="match status" value="1"/>
</dbReference>
<dbReference type="Gene3D" id="3.30.499.10">
    <property type="entry name" value="Aconitase, domain 3"/>
    <property type="match status" value="2"/>
</dbReference>
<dbReference type="HAMAP" id="MF_01026">
    <property type="entry name" value="LeuC_type1"/>
    <property type="match status" value="1"/>
</dbReference>
<dbReference type="InterPro" id="IPR004430">
    <property type="entry name" value="3-IsopropMal_deHydase_lsu"/>
</dbReference>
<dbReference type="InterPro" id="IPR015931">
    <property type="entry name" value="Acnase/IPM_dHydase_lsu_aba_1/3"/>
</dbReference>
<dbReference type="InterPro" id="IPR001030">
    <property type="entry name" value="Acoase/IPM_deHydtase_lsu_aba"/>
</dbReference>
<dbReference type="InterPro" id="IPR018136">
    <property type="entry name" value="Aconitase_4Fe-4S_BS"/>
</dbReference>
<dbReference type="InterPro" id="IPR036008">
    <property type="entry name" value="Aconitase_4Fe-4S_dom"/>
</dbReference>
<dbReference type="InterPro" id="IPR050067">
    <property type="entry name" value="IPM_dehydratase_rel_enz"/>
</dbReference>
<dbReference type="InterPro" id="IPR033941">
    <property type="entry name" value="IPMI_cat"/>
</dbReference>
<dbReference type="NCBIfam" id="TIGR00170">
    <property type="entry name" value="leuC"/>
    <property type="match status" value="1"/>
</dbReference>
<dbReference type="NCBIfam" id="NF004016">
    <property type="entry name" value="PRK05478.1"/>
    <property type="match status" value="1"/>
</dbReference>
<dbReference type="NCBIfam" id="NF009116">
    <property type="entry name" value="PRK12466.1"/>
    <property type="match status" value="1"/>
</dbReference>
<dbReference type="PANTHER" id="PTHR43822:SF9">
    <property type="entry name" value="3-ISOPROPYLMALATE DEHYDRATASE"/>
    <property type="match status" value="1"/>
</dbReference>
<dbReference type="PANTHER" id="PTHR43822">
    <property type="entry name" value="HOMOACONITASE, MITOCHONDRIAL-RELATED"/>
    <property type="match status" value="1"/>
</dbReference>
<dbReference type="Pfam" id="PF00330">
    <property type="entry name" value="Aconitase"/>
    <property type="match status" value="1"/>
</dbReference>
<dbReference type="PRINTS" id="PR00415">
    <property type="entry name" value="ACONITASE"/>
</dbReference>
<dbReference type="SUPFAM" id="SSF53732">
    <property type="entry name" value="Aconitase iron-sulfur domain"/>
    <property type="match status" value="1"/>
</dbReference>
<dbReference type="PROSITE" id="PS00450">
    <property type="entry name" value="ACONITASE_1"/>
    <property type="match status" value="1"/>
</dbReference>
<keyword id="KW-0004">4Fe-4S</keyword>
<keyword id="KW-0028">Amino-acid biosynthesis</keyword>
<keyword id="KW-0100">Branched-chain amino acid biosynthesis</keyword>
<keyword id="KW-0408">Iron</keyword>
<keyword id="KW-0411">Iron-sulfur</keyword>
<keyword id="KW-0432">Leucine biosynthesis</keyword>
<keyword id="KW-0456">Lyase</keyword>
<keyword id="KW-0479">Metal-binding</keyword>
<reference key="1">
    <citation type="journal article" date="2007" name="Nat. Biotechnol.">
        <title>Comparative analysis of the complete genome sequence of the plant growth-promoting bacterium Bacillus amyloliquefaciens FZB42.</title>
        <authorList>
            <person name="Chen X.H."/>
            <person name="Koumoutsi A."/>
            <person name="Scholz R."/>
            <person name="Eisenreich A."/>
            <person name="Schneider K."/>
            <person name="Heinemeyer I."/>
            <person name="Morgenstern B."/>
            <person name="Voss B."/>
            <person name="Hess W.R."/>
            <person name="Reva O."/>
            <person name="Junge H."/>
            <person name="Voigt B."/>
            <person name="Jungblut P.R."/>
            <person name="Vater J."/>
            <person name="Suessmuth R."/>
            <person name="Liesegang H."/>
            <person name="Strittmatter A."/>
            <person name="Gottschalk G."/>
            <person name="Borriss R."/>
        </authorList>
    </citation>
    <scope>NUCLEOTIDE SEQUENCE [LARGE SCALE GENOMIC DNA]</scope>
    <source>
        <strain>DSM 23117 / BGSC 10A6 / LMG 26770 / FZB42</strain>
    </source>
</reference>
<protein>
    <recommendedName>
        <fullName evidence="1">3-isopropylmalate dehydratase large subunit</fullName>
        <ecNumber evidence="1">4.2.1.33</ecNumber>
    </recommendedName>
    <alternativeName>
        <fullName evidence="1">Alpha-IPM isomerase</fullName>
        <shortName evidence="1">IPMI</shortName>
    </alternativeName>
    <alternativeName>
        <fullName evidence="1">Isopropylmalate isomerase</fullName>
    </alternativeName>
</protein>